<organismHost>
    <name type="scientific">Ornithodoros</name>
    <name type="common">relapsing fever ticks</name>
    <dbReference type="NCBI Taxonomy" id="6937"/>
</organismHost>
<organismHost>
    <name type="scientific">Phacochoerus aethiopicus</name>
    <name type="common">Warthog</name>
    <dbReference type="NCBI Taxonomy" id="85517"/>
</organismHost>
<organismHost>
    <name type="scientific">Phacochoerus africanus</name>
    <name type="common">Warthog</name>
    <dbReference type="NCBI Taxonomy" id="41426"/>
</organismHost>
<organismHost>
    <name type="scientific">Potamochoerus larvatus</name>
    <name type="common">Bushpig</name>
    <dbReference type="NCBI Taxonomy" id="273792"/>
</organismHost>
<organismHost>
    <name type="scientific">Sus scrofa</name>
    <name type="common">Pig</name>
    <dbReference type="NCBI Taxonomy" id="9823"/>
</organismHost>
<name>VF124_ASFM2</name>
<protein>
    <recommendedName>
        <fullName>Uncharacterized protein H124R</fullName>
        <shortName>pH124R</shortName>
    </recommendedName>
</protein>
<sequence length="124" mass="14806">MNLEYVHVVQKFNQVLLELTKKVCTVVGGSKPTYWYHHIRRVCSECPSMPMTMIGPYLNVYKTQILTKDKNFFMNFDPAHNEYTFIIQKLKEAARNMSEEELEQYWVKLLFLLKSYIKCKPFIN</sequence>
<proteinExistence type="inferred from homology"/>
<gene>
    <name type="ordered locus">Mal-123</name>
    <name type="ORF">j3R</name>
</gene>
<feature type="chain" id="PRO_0000373497" description="Uncharacterized protein H124R">
    <location>
        <begin position="1"/>
        <end position="124"/>
    </location>
</feature>
<dbReference type="EMBL" id="X71982">
    <property type="protein sequence ID" value="CAA50823.1"/>
    <property type="molecule type" value="Genomic_DNA"/>
</dbReference>
<dbReference type="EMBL" id="AY261361">
    <property type="status" value="NOT_ANNOTATED_CDS"/>
    <property type="molecule type" value="Genomic_DNA"/>
</dbReference>
<dbReference type="SMR" id="Q65231"/>
<dbReference type="Proteomes" id="UP000000860">
    <property type="component" value="Segment"/>
</dbReference>
<dbReference type="GO" id="GO:0044423">
    <property type="term" value="C:virion component"/>
    <property type="evidence" value="ECO:0007669"/>
    <property type="project" value="UniProtKB-KW"/>
</dbReference>
<evidence type="ECO:0000250" key="1">
    <source>
        <dbReference type="UniProtKB" id="Q65186"/>
    </source>
</evidence>
<evidence type="ECO:0000305" key="2"/>
<keyword id="KW-0426">Late protein</keyword>
<keyword id="KW-0946">Virion</keyword>
<accession>Q65231</accession>
<comment type="subcellular location">
    <subcellularLocation>
        <location evidence="1">Virion</location>
    </subcellularLocation>
</comment>
<comment type="induction">
    <text evidence="2">Expressed in the late phase of the viral replicative cycle.</text>
</comment>
<comment type="similarity">
    <text evidence="2">Belongs to the asfivirus H124R family.</text>
</comment>
<reference key="1">
    <citation type="journal article" date="1994" name="J. Gen. Virol.">
        <title>Nucleotide sequence of a 55 kbp region from the right end of the genome of a pathogenic African swine fever virus isolate (Malawi LIL20/1).</title>
        <authorList>
            <person name="Dixon L.K."/>
            <person name="Twigg S.R.F."/>
            <person name="Baylis S.A."/>
            <person name="Vydelingum S."/>
            <person name="Bristow C."/>
            <person name="Hammond J.M."/>
            <person name="Smith G.L."/>
        </authorList>
    </citation>
    <scope>NUCLEOTIDE SEQUENCE [GENOMIC DNA]</scope>
</reference>
<reference key="2">
    <citation type="submission" date="2003-03" db="EMBL/GenBank/DDBJ databases">
        <title>African swine fever virus genomes.</title>
        <authorList>
            <person name="Kutish G.F."/>
            <person name="Rock D.L."/>
        </authorList>
    </citation>
    <scope>NUCLEOTIDE SEQUENCE [LARGE SCALE GENOMIC DNA]</scope>
</reference>
<organism>
    <name type="scientific">African swine fever virus (isolate Tick/Malawi/Lil 20-1/1983)</name>
    <name type="common">ASFV</name>
    <dbReference type="NCBI Taxonomy" id="10500"/>
    <lineage>
        <taxon>Viruses</taxon>
        <taxon>Varidnaviria</taxon>
        <taxon>Bamfordvirae</taxon>
        <taxon>Nucleocytoviricota</taxon>
        <taxon>Pokkesviricetes</taxon>
        <taxon>Asfuvirales</taxon>
        <taxon>Asfarviridae</taxon>
        <taxon>Asfivirus</taxon>
        <taxon>African swine fever virus</taxon>
    </lineage>
</organism>